<comment type="function">
    <text evidence="1">Catalyzes the phosphorylation of the position 2 hydroxy group of 4-diphosphocytidyl-2C-methyl-D-erythritol.</text>
</comment>
<comment type="catalytic activity">
    <reaction evidence="1">
        <text>4-CDP-2-C-methyl-D-erythritol + ATP = 4-CDP-2-C-methyl-D-erythritol 2-phosphate + ADP + H(+)</text>
        <dbReference type="Rhea" id="RHEA:18437"/>
        <dbReference type="ChEBI" id="CHEBI:15378"/>
        <dbReference type="ChEBI" id="CHEBI:30616"/>
        <dbReference type="ChEBI" id="CHEBI:57823"/>
        <dbReference type="ChEBI" id="CHEBI:57919"/>
        <dbReference type="ChEBI" id="CHEBI:456216"/>
        <dbReference type="EC" id="2.7.1.148"/>
    </reaction>
</comment>
<comment type="similarity">
    <text evidence="1">Belongs to the GHMP kinase family. IspE subfamily.</text>
</comment>
<evidence type="ECO:0000255" key="1">
    <source>
        <dbReference type="HAMAP-Rule" id="MF_00061"/>
    </source>
</evidence>
<organism>
    <name type="scientific">Staphylococcus epidermidis (strain ATCC 35984 / DSM 28319 / BCRC 17069 / CCUG 31568 / BM 3577 / RP62A)</name>
    <dbReference type="NCBI Taxonomy" id="176279"/>
    <lineage>
        <taxon>Bacteria</taxon>
        <taxon>Bacillati</taxon>
        <taxon>Bacillota</taxon>
        <taxon>Bacilli</taxon>
        <taxon>Bacillales</taxon>
        <taxon>Staphylococcaceae</taxon>
        <taxon>Staphylococcus</taxon>
    </lineage>
</organism>
<keyword id="KW-0067">ATP-binding</keyword>
<keyword id="KW-0418">Kinase</keyword>
<keyword id="KW-0547">Nucleotide-binding</keyword>
<keyword id="KW-1185">Reference proteome</keyword>
<keyword id="KW-0808">Transferase</keyword>
<name>ISPE_STAEQ</name>
<sequence>MIYETAPAKINFTLDTLFKRDDGYHEIEMVMTTVDLNDRLSFEKRTDNKIVVDIEHNYVPNDNKNLAYKAADLMFERFNINEGVTISIDKDIPVSAGLAGGSADAAATMRGLNRLFGLGQSLDALAALGIQIGTDIPFCIYNQTAVCTGRGEQVTFLKRPPSAWVVLAKPNIGISSPDVFKALDLTEEHIVHNEKCKQALENNDYHLLCNSLSNRLEPVSMAMHPDIKKIKDNMLQCGADGALMSGSGPTVYGLAQKERQAKNIYNAVNGCCNEVYLVRLLG</sequence>
<protein>
    <recommendedName>
        <fullName evidence="1">Putative 4-diphosphocytidyl-2-C-methyl-D-erythritol kinase</fullName>
        <shortName evidence="1">CMK</shortName>
        <ecNumber evidence="1">2.7.1.148</ecNumber>
    </recommendedName>
    <alternativeName>
        <fullName evidence="1">4-(cytidine-5'-diphospho)-2-C-methyl-D-erythritol kinase</fullName>
    </alternativeName>
</protein>
<feature type="chain" id="PRO_0000189268" description="Putative 4-diphosphocytidyl-2-C-methyl-D-erythritol kinase">
    <location>
        <begin position="1"/>
        <end position="282"/>
    </location>
</feature>
<feature type="active site" evidence="1">
    <location>
        <position position="9"/>
    </location>
</feature>
<feature type="active site" evidence="1">
    <location>
        <position position="135"/>
    </location>
</feature>
<feature type="binding site" evidence="1">
    <location>
        <begin position="93"/>
        <end position="103"/>
    </location>
    <ligand>
        <name>ATP</name>
        <dbReference type="ChEBI" id="CHEBI:30616"/>
    </ligand>
</feature>
<dbReference type="EC" id="2.7.1.148" evidence="1"/>
<dbReference type="EMBL" id="CP000029">
    <property type="protein sequence ID" value="AAW53485.1"/>
    <property type="molecule type" value="Genomic_DNA"/>
</dbReference>
<dbReference type="RefSeq" id="WP_001832203.1">
    <property type="nucleotide sequence ID" value="NC_002976.3"/>
</dbReference>
<dbReference type="SMR" id="Q5HRR0"/>
<dbReference type="STRING" id="176279.SERP0133"/>
<dbReference type="GeneID" id="50019594"/>
<dbReference type="KEGG" id="ser:SERP0133"/>
<dbReference type="eggNOG" id="COG1947">
    <property type="taxonomic scope" value="Bacteria"/>
</dbReference>
<dbReference type="HOGENOM" id="CLU_053057_1_1_9"/>
<dbReference type="Proteomes" id="UP000000531">
    <property type="component" value="Chromosome"/>
</dbReference>
<dbReference type="GO" id="GO:0050515">
    <property type="term" value="F:4-(cytidine 5'-diphospho)-2-C-methyl-D-erythritol kinase activity"/>
    <property type="evidence" value="ECO:0007669"/>
    <property type="project" value="UniProtKB-UniRule"/>
</dbReference>
<dbReference type="GO" id="GO:0005524">
    <property type="term" value="F:ATP binding"/>
    <property type="evidence" value="ECO:0007669"/>
    <property type="project" value="UniProtKB-UniRule"/>
</dbReference>
<dbReference type="GO" id="GO:0016114">
    <property type="term" value="P:terpenoid biosynthetic process"/>
    <property type="evidence" value="ECO:0007669"/>
    <property type="project" value="InterPro"/>
</dbReference>
<dbReference type="FunFam" id="3.30.230.10:FF:000029">
    <property type="entry name" value="4-diphosphocytidyl-2-C-methyl-D-erythritol kinase"/>
    <property type="match status" value="1"/>
</dbReference>
<dbReference type="FunFam" id="3.30.70.890:FF:000006">
    <property type="entry name" value="4-diphosphocytidyl-2-C-methyl-D-erythritol kinase"/>
    <property type="match status" value="1"/>
</dbReference>
<dbReference type="Gene3D" id="3.30.230.10">
    <property type="match status" value="1"/>
</dbReference>
<dbReference type="Gene3D" id="3.30.70.890">
    <property type="entry name" value="GHMP kinase, C-terminal domain"/>
    <property type="match status" value="1"/>
</dbReference>
<dbReference type="HAMAP" id="MF_00061">
    <property type="entry name" value="IspE"/>
    <property type="match status" value="1"/>
</dbReference>
<dbReference type="InterPro" id="IPR013750">
    <property type="entry name" value="GHMP_kinase_C_dom"/>
</dbReference>
<dbReference type="InterPro" id="IPR036554">
    <property type="entry name" value="GHMP_kinase_C_sf"/>
</dbReference>
<dbReference type="InterPro" id="IPR006204">
    <property type="entry name" value="GHMP_kinase_N_dom"/>
</dbReference>
<dbReference type="InterPro" id="IPR004424">
    <property type="entry name" value="IspE"/>
</dbReference>
<dbReference type="InterPro" id="IPR020568">
    <property type="entry name" value="Ribosomal_Su5_D2-typ_SF"/>
</dbReference>
<dbReference type="InterPro" id="IPR014721">
    <property type="entry name" value="Ribsml_uS5_D2-typ_fold_subgr"/>
</dbReference>
<dbReference type="NCBIfam" id="TIGR00154">
    <property type="entry name" value="ispE"/>
    <property type="match status" value="1"/>
</dbReference>
<dbReference type="PANTHER" id="PTHR43527">
    <property type="entry name" value="4-DIPHOSPHOCYTIDYL-2-C-METHYL-D-ERYTHRITOL KINASE, CHLOROPLASTIC"/>
    <property type="match status" value="1"/>
</dbReference>
<dbReference type="PANTHER" id="PTHR43527:SF2">
    <property type="entry name" value="4-DIPHOSPHOCYTIDYL-2-C-METHYL-D-ERYTHRITOL KINASE, CHLOROPLASTIC"/>
    <property type="match status" value="1"/>
</dbReference>
<dbReference type="Pfam" id="PF08544">
    <property type="entry name" value="GHMP_kinases_C"/>
    <property type="match status" value="1"/>
</dbReference>
<dbReference type="Pfam" id="PF00288">
    <property type="entry name" value="GHMP_kinases_N"/>
    <property type="match status" value="1"/>
</dbReference>
<dbReference type="PIRSF" id="PIRSF010376">
    <property type="entry name" value="IspE"/>
    <property type="match status" value="1"/>
</dbReference>
<dbReference type="SUPFAM" id="SSF55060">
    <property type="entry name" value="GHMP Kinase, C-terminal domain"/>
    <property type="match status" value="1"/>
</dbReference>
<dbReference type="SUPFAM" id="SSF54211">
    <property type="entry name" value="Ribosomal protein S5 domain 2-like"/>
    <property type="match status" value="1"/>
</dbReference>
<reference key="1">
    <citation type="journal article" date="2005" name="J. Bacteriol.">
        <title>Insights on evolution of virulence and resistance from the complete genome analysis of an early methicillin-resistant Staphylococcus aureus strain and a biofilm-producing methicillin-resistant Staphylococcus epidermidis strain.</title>
        <authorList>
            <person name="Gill S.R."/>
            <person name="Fouts D.E."/>
            <person name="Archer G.L."/>
            <person name="Mongodin E.F."/>
            <person name="DeBoy R.T."/>
            <person name="Ravel J."/>
            <person name="Paulsen I.T."/>
            <person name="Kolonay J.F."/>
            <person name="Brinkac L.M."/>
            <person name="Beanan M.J."/>
            <person name="Dodson R.J."/>
            <person name="Daugherty S.C."/>
            <person name="Madupu R."/>
            <person name="Angiuoli S.V."/>
            <person name="Durkin A.S."/>
            <person name="Haft D.H."/>
            <person name="Vamathevan J.J."/>
            <person name="Khouri H."/>
            <person name="Utterback T.R."/>
            <person name="Lee C."/>
            <person name="Dimitrov G."/>
            <person name="Jiang L."/>
            <person name="Qin H."/>
            <person name="Weidman J."/>
            <person name="Tran K."/>
            <person name="Kang K.H."/>
            <person name="Hance I.R."/>
            <person name="Nelson K.E."/>
            <person name="Fraser C.M."/>
        </authorList>
    </citation>
    <scope>NUCLEOTIDE SEQUENCE [LARGE SCALE GENOMIC DNA]</scope>
    <source>
        <strain>ATCC 35984 / DSM 28319 / BCRC 17069 / CCUG 31568 / BM 3577 / RP62A</strain>
    </source>
</reference>
<accession>Q5HRR0</accession>
<gene>
    <name type="primary">ispE</name>
    <name type="ordered locus">SERP0133</name>
</gene>
<proteinExistence type="inferred from homology"/>